<gene>
    <name type="primary">Zfyve19</name>
    <name type="synonym">Anchr</name>
</gene>
<sequence length="389" mass="43272">MESRCYGCAVKFTLFKKEYGCKNCGRAFCNGCLSFSALVPRAGNTQQKVCKQCHTILTRGSSDNASKWSPPQNYKKRVAALEAKKKSSTSHSQSLTHKDQAIAERLARLRQENKPKSVPSQAEIEARLAALKDEVQGPIPSTQEMEDRLAALQGRVPPSHTVRPAHQAPDTRTQAQQTQDLLTQLTAEVAIDENCQPRASASLQNDLNKGAARSQRTNSQGQASQSLEEEKYKLLAEAAVELQEENTRQERILALAKRLAVLKGQDPSRVTLQDYHLPDSDEDEETAIQRVMQQLTEEAALDEASGFNIPEKPAPGSRAQPCKAEMEGPQAEEEELPWCCICNEDATLRCAGCDGDLYCARCFREGHDNFDLKEHQTSPYHPRRPCQEH</sequence>
<reference key="1">
    <citation type="journal article" date="2005" name="Science">
        <title>The transcriptional landscape of the mammalian genome.</title>
        <authorList>
            <person name="Carninci P."/>
            <person name="Kasukawa T."/>
            <person name="Katayama S."/>
            <person name="Gough J."/>
            <person name="Frith M.C."/>
            <person name="Maeda N."/>
            <person name="Oyama R."/>
            <person name="Ravasi T."/>
            <person name="Lenhard B."/>
            <person name="Wells C."/>
            <person name="Kodzius R."/>
            <person name="Shimokawa K."/>
            <person name="Bajic V.B."/>
            <person name="Brenner S.E."/>
            <person name="Batalov S."/>
            <person name="Forrest A.R."/>
            <person name="Zavolan M."/>
            <person name="Davis M.J."/>
            <person name="Wilming L.G."/>
            <person name="Aidinis V."/>
            <person name="Allen J.E."/>
            <person name="Ambesi-Impiombato A."/>
            <person name="Apweiler R."/>
            <person name="Aturaliya R.N."/>
            <person name="Bailey T.L."/>
            <person name="Bansal M."/>
            <person name="Baxter L."/>
            <person name="Beisel K.W."/>
            <person name="Bersano T."/>
            <person name="Bono H."/>
            <person name="Chalk A.M."/>
            <person name="Chiu K.P."/>
            <person name="Choudhary V."/>
            <person name="Christoffels A."/>
            <person name="Clutterbuck D.R."/>
            <person name="Crowe M.L."/>
            <person name="Dalla E."/>
            <person name="Dalrymple B.P."/>
            <person name="de Bono B."/>
            <person name="Della Gatta G."/>
            <person name="di Bernardo D."/>
            <person name="Down T."/>
            <person name="Engstrom P."/>
            <person name="Fagiolini M."/>
            <person name="Faulkner G."/>
            <person name="Fletcher C.F."/>
            <person name="Fukushima T."/>
            <person name="Furuno M."/>
            <person name="Futaki S."/>
            <person name="Gariboldi M."/>
            <person name="Georgii-Hemming P."/>
            <person name="Gingeras T.R."/>
            <person name="Gojobori T."/>
            <person name="Green R.E."/>
            <person name="Gustincich S."/>
            <person name="Harbers M."/>
            <person name="Hayashi Y."/>
            <person name="Hensch T.K."/>
            <person name="Hirokawa N."/>
            <person name="Hill D."/>
            <person name="Huminiecki L."/>
            <person name="Iacono M."/>
            <person name="Ikeo K."/>
            <person name="Iwama A."/>
            <person name="Ishikawa T."/>
            <person name="Jakt M."/>
            <person name="Kanapin A."/>
            <person name="Katoh M."/>
            <person name="Kawasawa Y."/>
            <person name="Kelso J."/>
            <person name="Kitamura H."/>
            <person name="Kitano H."/>
            <person name="Kollias G."/>
            <person name="Krishnan S.P."/>
            <person name="Kruger A."/>
            <person name="Kummerfeld S.K."/>
            <person name="Kurochkin I.V."/>
            <person name="Lareau L.F."/>
            <person name="Lazarevic D."/>
            <person name="Lipovich L."/>
            <person name="Liu J."/>
            <person name="Liuni S."/>
            <person name="McWilliam S."/>
            <person name="Madan Babu M."/>
            <person name="Madera M."/>
            <person name="Marchionni L."/>
            <person name="Matsuda H."/>
            <person name="Matsuzawa S."/>
            <person name="Miki H."/>
            <person name="Mignone F."/>
            <person name="Miyake S."/>
            <person name="Morris K."/>
            <person name="Mottagui-Tabar S."/>
            <person name="Mulder N."/>
            <person name="Nakano N."/>
            <person name="Nakauchi H."/>
            <person name="Ng P."/>
            <person name="Nilsson R."/>
            <person name="Nishiguchi S."/>
            <person name="Nishikawa S."/>
            <person name="Nori F."/>
            <person name="Ohara O."/>
            <person name="Okazaki Y."/>
            <person name="Orlando V."/>
            <person name="Pang K.C."/>
            <person name="Pavan W.J."/>
            <person name="Pavesi G."/>
            <person name="Pesole G."/>
            <person name="Petrovsky N."/>
            <person name="Piazza S."/>
            <person name="Reed J."/>
            <person name="Reid J.F."/>
            <person name="Ring B.Z."/>
            <person name="Ringwald M."/>
            <person name="Rost B."/>
            <person name="Ruan Y."/>
            <person name="Salzberg S.L."/>
            <person name="Sandelin A."/>
            <person name="Schneider C."/>
            <person name="Schoenbach C."/>
            <person name="Sekiguchi K."/>
            <person name="Semple C.A."/>
            <person name="Seno S."/>
            <person name="Sessa L."/>
            <person name="Sheng Y."/>
            <person name="Shibata Y."/>
            <person name="Shimada H."/>
            <person name="Shimada K."/>
            <person name="Silva D."/>
            <person name="Sinclair B."/>
            <person name="Sperling S."/>
            <person name="Stupka E."/>
            <person name="Sugiura K."/>
            <person name="Sultana R."/>
            <person name="Takenaka Y."/>
            <person name="Taki K."/>
            <person name="Tammoja K."/>
            <person name="Tan S.L."/>
            <person name="Tang S."/>
            <person name="Taylor M.S."/>
            <person name="Tegner J."/>
            <person name="Teichmann S.A."/>
            <person name="Ueda H.R."/>
            <person name="van Nimwegen E."/>
            <person name="Verardo R."/>
            <person name="Wei C.L."/>
            <person name="Yagi K."/>
            <person name="Yamanishi H."/>
            <person name="Zabarovsky E."/>
            <person name="Zhu S."/>
            <person name="Zimmer A."/>
            <person name="Hide W."/>
            <person name="Bult C."/>
            <person name="Grimmond S.M."/>
            <person name="Teasdale R.D."/>
            <person name="Liu E.T."/>
            <person name="Brusic V."/>
            <person name="Quackenbush J."/>
            <person name="Wahlestedt C."/>
            <person name="Mattick J.S."/>
            <person name="Hume D.A."/>
            <person name="Kai C."/>
            <person name="Sasaki D."/>
            <person name="Tomaru Y."/>
            <person name="Fukuda S."/>
            <person name="Kanamori-Katayama M."/>
            <person name="Suzuki M."/>
            <person name="Aoki J."/>
            <person name="Arakawa T."/>
            <person name="Iida J."/>
            <person name="Imamura K."/>
            <person name="Itoh M."/>
            <person name="Kato T."/>
            <person name="Kawaji H."/>
            <person name="Kawagashira N."/>
            <person name="Kawashima T."/>
            <person name="Kojima M."/>
            <person name="Kondo S."/>
            <person name="Konno H."/>
            <person name="Nakano K."/>
            <person name="Ninomiya N."/>
            <person name="Nishio T."/>
            <person name="Okada M."/>
            <person name="Plessy C."/>
            <person name="Shibata K."/>
            <person name="Shiraki T."/>
            <person name="Suzuki S."/>
            <person name="Tagami M."/>
            <person name="Waki K."/>
            <person name="Watahiki A."/>
            <person name="Okamura-Oho Y."/>
            <person name="Suzuki H."/>
            <person name="Kawai J."/>
            <person name="Hayashizaki Y."/>
        </authorList>
    </citation>
    <scope>NUCLEOTIDE SEQUENCE [LARGE SCALE MRNA]</scope>
    <scope>VARIANT THR-157</scope>
    <source>
        <strain>C57BL/6J</strain>
        <tissue>Cerebellum</tissue>
    </source>
</reference>
<reference key="2">
    <citation type="journal article" date="2009" name="PLoS Biol.">
        <title>Lineage-specific biology revealed by a finished genome assembly of the mouse.</title>
        <authorList>
            <person name="Church D.M."/>
            <person name="Goodstadt L."/>
            <person name="Hillier L.W."/>
            <person name="Zody M.C."/>
            <person name="Goldstein S."/>
            <person name="She X."/>
            <person name="Bult C.J."/>
            <person name="Agarwala R."/>
            <person name="Cherry J.L."/>
            <person name="DiCuccio M."/>
            <person name="Hlavina W."/>
            <person name="Kapustin Y."/>
            <person name="Meric P."/>
            <person name="Maglott D."/>
            <person name="Birtle Z."/>
            <person name="Marques A.C."/>
            <person name="Graves T."/>
            <person name="Zhou S."/>
            <person name="Teague B."/>
            <person name="Potamousis K."/>
            <person name="Churas C."/>
            <person name="Place M."/>
            <person name="Herschleb J."/>
            <person name="Runnheim R."/>
            <person name="Forrest D."/>
            <person name="Amos-Landgraf J."/>
            <person name="Schwartz D.C."/>
            <person name="Cheng Z."/>
            <person name="Lindblad-Toh K."/>
            <person name="Eichler E.E."/>
            <person name="Ponting C.P."/>
        </authorList>
    </citation>
    <scope>NUCLEOTIDE SEQUENCE [LARGE SCALE GENOMIC DNA]</scope>
    <source>
        <strain>C57BL/6J</strain>
    </source>
</reference>
<reference key="3">
    <citation type="journal article" date="2004" name="Genome Res.">
        <title>The status, quality, and expansion of the NIH full-length cDNA project: the Mammalian Gene Collection (MGC).</title>
        <authorList>
            <consortium name="The MGC Project Team"/>
        </authorList>
    </citation>
    <scope>NUCLEOTIDE SEQUENCE [LARGE SCALE MRNA]</scope>
    <scope>VARIANTS SER-64; GLN-91; GLY-94; LEU-164 AND ALA-229</scope>
    <source>
        <strain>FVB/N</strain>
        <tissue>Mammary gland</tissue>
    </source>
</reference>
<reference key="4">
    <citation type="journal article" date="2007" name="Proc. Natl. Acad. Sci. U.S.A.">
        <title>Large-scale phosphorylation analysis of mouse liver.</title>
        <authorList>
            <person name="Villen J."/>
            <person name="Beausoleil S.A."/>
            <person name="Gerber S.A."/>
            <person name="Gygi S.P."/>
        </authorList>
    </citation>
    <scope>PHOSPHORYLATION [LARGE SCALE ANALYSIS] AT SER-280</scope>
    <scope>IDENTIFICATION BY MASS SPECTROMETRY [LARGE SCALE ANALYSIS]</scope>
    <source>
        <tissue>Liver</tissue>
    </source>
</reference>
<reference key="5">
    <citation type="journal article" date="2008" name="J. Proteome Res.">
        <title>Specific phosphopeptide enrichment with immobilized titanium ion affinity chromatography adsorbent for phosphoproteome analysis.</title>
        <authorList>
            <person name="Zhou H."/>
            <person name="Ye M."/>
            <person name="Dong J."/>
            <person name="Han G."/>
            <person name="Jiang X."/>
            <person name="Wu R."/>
            <person name="Zou H."/>
        </authorList>
    </citation>
    <scope>IDENTIFICATION BY MASS SPECTROMETRY [LARGE SCALE ANALYSIS]</scope>
    <source>
        <tissue>Liver</tissue>
    </source>
</reference>
<reference key="6">
    <citation type="journal article" date="2009" name="Immunity">
        <title>The phagosomal proteome in interferon-gamma-activated macrophages.</title>
        <authorList>
            <person name="Trost M."/>
            <person name="English L."/>
            <person name="Lemieux S."/>
            <person name="Courcelles M."/>
            <person name="Desjardins M."/>
            <person name="Thibault P."/>
        </authorList>
    </citation>
    <scope>PHOSPHORYLATION [LARGE SCALE ANALYSIS] AT SER-280</scope>
    <scope>IDENTIFICATION BY MASS SPECTROMETRY [LARGE SCALE ANALYSIS]</scope>
</reference>
<reference key="7">
    <citation type="journal article" date="2009" name="Mol. Cell. Proteomics">
        <title>Large scale localization of protein phosphorylation by use of electron capture dissociation mass spectrometry.</title>
        <authorList>
            <person name="Sweet S.M."/>
            <person name="Bailey C.M."/>
            <person name="Cunningham D.L."/>
            <person name="Heath J.K."/>
            <person name="Cooper H.J."/>
        </authorList>
    </citation>
    <scope>PHOSPHORYLATION [LARGE SCALE ANALYSIS] AT SER-280</scope>
    <scope>IDENTIFICATION BY MASS SPECTROMETRY [LARGE SCALE ANALYSIS]</scope>
    <source>
        <tissue>Embryonic fibroblast</tissue>
    </source>
</reference>
<reference key="8">
    <citation type="journal article" date="2010" name="Cell">
        <title>A tissue-specific atlas of mouse protein phosphorylation and expression.</title>
        <authorList>
            <person name="Huttlin E.L."/>
            <person name="Jedrychowski M.P."/>
            <person name="Elias J.E."/>
            <person name="Goswami T."/>
            <person name="Rad R."/>
            <person name="Beausoleil S.A."/>
            <person name="Villen J."/>
            <person name="Haas W."/>
            <person name="Sowa M.E."/>
            <person name="Gygi S.P."/>
        </authorList>
    </citation>
    <scope>PHOSPHORYLATION [LARGE SCALE ANALYSIS] AT SER-280</scope>
    <scope>IDENTIFICATION BY MASS SPECTROMETRY [LARGE SCALE ANALYSIS]</scope>
    <source>
        <tissue>Brain</tissue>
        <tissue>Brown adipose tissue</tissue>
        <tissue>Heart</tissue>
        <tissue>Kidney</tissue>
        <tissue>Liver</tissue>
        <tissue>Lung</tissue>
        <tissue>Pancreas</tissue>
        <tissue>Spleen</tissue>
        <tissue>Testis</tissue>
    </source>
</reference>
<reference key="9">
    <citation type="submission" date="2006-06" db="PDB data bank">
        <title>Solution structure of the FYVE domain and the B-box domain of the zinc finger FYVE domain-containing protein 19 from Mus musculus.</title>
        <authorList>
            <consortium name="RIKEN structural genomics initiative (RSGI)"/>
        </authorList>
    </citation>
    <scope>STRUCTURE BY NMR OF 1-75 AND 336-389</scope>
</reference>
<feature type="chain" id="PRO_0000098719" description="Abscission/NoCut checkpoint regulator">
    <location>
        <begin position="1"/>
        <end position="389"/>
    </location>
</feature>
<feature type="zinc finger region" description="FYVE-type" evidence="4">
    <location>
        <begin position="1"/>
        <end position="58"/>
    </location>
</feature>
<feature type="region of interest" description="Disordered" evidence="5">
    <location>
        <begin position="158"/>
        <end position="177"/>
    </location>
</feature>
<feature type="region of interest" description="Disordered" evidence="5">
    <location>
        <begin position="204"/>
        <end position="227"/>
    </location>
</feature>
<feature type="coiled-coil region" evidence="3">
    <location>
        <begin position="226"/>
        <end position="261"/>
    </location>
</feature>
<feature type="short sequence motif" description="MIM1-A">
    <location>
        <begin position="99"/>
        <end position="112"/>
    </location>
</feature>
<feature type="short sequence motif" description="MIM1-B">
    <location>
        <begin position="252"/>
        <end position="265"/>
    </location>
</feature>
<feature type="compositionally biased region" description="Low complexity" evidence="5">
    <location>
        <begin position="167"/>
        <end position="177"/>
    </location>
</feature>
<feature type="compositionally biased region" description="Polar residues" evidence="5">
    <location>
        <begin position="214"/>
        <end position="226"/>
    </location>
</feature>
<feature type="binding site" evidence="4">
    <location>
        <position position="5"/>
    </location>
    <ligand>
        <name>Zn(2+)</name>
        <dbReference type="ChEBI" id="CHEBI:29105"/>
        <label>1</label>
    </ligand>
</feature>
<feature type="binding site" evidence="4">
    <location>
        <position position="8"/>
    </location>
    <ligand>
        <name>Zn(2+)</name>
        <dbReference type="ChEBI" id="CHEBI:29105"/>
        <label>1</label>
    </ligand>
</feature>
<feature type="binding site" evidence="4">
    <location>
        <position position="21"/>
    </location>
    <ligand>
        <name>Zn(2+)</name>
        <dbReference type="ChEBI" id="CHEBI:29105"/>
        <label>2</label>
    </ligand>
</feature>
<feature type="binding site" evidence="4">
    <location>
        <position position="24"/>
    </location>
    <ligand>
        <name>Zn(2+)</name>
        <dbReference type="ChEBI" id="CHEBI:29105"/>
        <label>2</label>
    </ligand>
</feature>
<feature type="binding site" evidence="4">
    <location>
        <position position="29"/>
    </location>
    <ligand>
        <name>Zn(2+)</name>
        <dbReference type="ChEBI" id="CHEBI:29105"/>
        <label>1</label>
    </ligand>
</feature>
<feature type="binding site" evidence="4">
    <location>
        <position position="32"/>
    </location>
    <ligand>
        <name>Zn(2+)</name>
        <dbReference type="ChEBI" id="CHEBI:29105"/>
        <label>1</label>
    </ligand>
</feature>
<feature type="binding site" evidence="4">
    <location>
        <position position="50"/>
    </location>
    <ligand>
        <name>Zn(2+)</name>
        <dbReference type="ChEBI" id="CHEBI:29105"/>
        <label>2</label>
    </ligand>
</feature>
<feature type="binding site" evidence="4">
    <location>
        <position position="53"/>
    </location>
    <ligand>
        <name>Zn(2+)</name>
        <dbReference type="ChEBI" id="CHEBI:29105"/>
        <label>2</label>
    </ligand>
</feature>
<feature type="modified residue" description="Phosphoserine" evidence="2">
    <location>
        <position position="69"/>
    </location>
</feature>
<feature type="modified residue" description="Phosphoserine" evidence="2">
    <location>
        <position position="219"/>
    </location>
</feature>
<feature type="modified residue" description="Phosphoserine" evidence="8 9 10 11">
    <location>
        <position position="280"/>
    </location>
</feature>
<feature type="cross-link" description="Glycyl lysine isopeptide (Lys-Gly) (interchain with G-Cter in SUMO2)" evidence="2">
    <location>
        <position position="132"/>
    </location>
</feature>
<feature type="sequence variant" description="In strain: FVB/N." evidence="6">
    <original>N</original>
    <variation>S</variation>
    <location>
        <position position="64"/>
    </location>
</feature>
<feature type="sequence variant" description="In strain: FVB/N." evidence="6">
    <original>H</original>
    <variation>Q</variation>
    <location>
        <position position="91"/>
    </location>
</feature>
<feature type="sequence variant" description="In strain: FVB/N." evidence="6">
    <original>S</original>
    <variation>G</variation>
    <location>
        <position position="94"/>
    </location>
</feature>
<feature type="sequence variant" description="In strain: C57BL/6." evidence="7">
    <original>P</original>
    <variation>T</variation>
    <location>
        <position position="157"/>
    </location>
</feature>
<feature type="sequence variant" description="In strain: FVB/N." evidence="6">
    <original>P</original>
    <variation>L</variation>
    <location>
        <position position="164"/>
    </location>
</feature>
<feature type="sequence variant" description="In strain: FVB/N." evidence="6">
    <original>E</original>
    <variation>A</variation>
    <location>
        <position position="229"/>
    </location>
</feature>
<feature type="turn" evidence="12">
    <location>
        <begin position="6"/>
        <end position="8"/>
    </location>
</feature>
<feature type="strand" evidence="12">
    <location>
        <begin position="14"/>
        <end position="16"/>
    </location>
</feature>
<feature type="strand" evidence="12">
    <location>
        <begin position="18"/>
        <end position="20"/>
    </location>
</feature>
<feature type="strand" evidence="12">
    <location>
        <begin position="22"/>
        <end position="24"/>
    </location>
</feature>
<feature type="strand" evidence="12">
    <location>
        <begin position="27"/>
        <end position="29"/>
    </location>
</feature>
<feature type="turn" evidence="12">
    <location>
        <begin position="30"/>
        <end position="32"/>
    </location>
</feature>
<feature type="strand" evidence="12">
    <location>
        <begin position="35"/>
        <end position="39"/>
    </location>
</feature>
<feature type="turn" evidence="12">
    <location>
        <begin position="40"/>
        <end position="43"/>
    </location>
</feature>
<feature type="strand" evidence="12">
    <location>
        <begin position="44"/>
        <end position="49"/>
    </location>
</feature>
<feature type="helix" evidence="12">
    <location>
        <begin position="51"/>
        <end position="59"/>
    </location>
</feature>
<feature type="strand" evidence="12">
    <location>
        <begin position="66"/>
        <end position="68"/>
    </location>
</feature>
<feature type="turn" evidence="13">
    <location>
        <begin position="340"/>
        <end position="342"/>
    </location>
</feature>
<feature type="strand" evidence="13">
    <location>
        <begin position="348"/>
        <end position="350"/>
    </location>
</feature>
<feature type="turn" evidence="13">
    <location>
        <begin position="351"/>
        <end position="354"/>
    </location>
</feature>
<feature type="strand" evidence="13">
    <location>
        <begin position="355"/>
        <end position="358"/>
    </location>
</feature>
<feature type="helix" evidence="13">
    <location>
        <begin position="362"/>
        <end position="366"/>
    </location>
</feature>
<feature type="turn" evidence="13">
    <location>
        <begin position="367"/>
        <end position="369"/>
    </location>
</feature>
<feature type="turn" evidence="13">
    <location>
        <begin position="372"/>
        <end position="374"/>
    </location>
</feature>
<feature type="strand" evidence="13">
    <location>
        <begin position="383"/>
        <end position="386"/>
    </location>
</feature>
<protein>
    <recommendedName>
        <fullName>Abscission/NoCut checkpoint regulator</fullName>
        <shortName>ANCHR</shortName>
    </recommendedName>
    <alternativeName>
        <fullName>Zinc finger FYVE domain-containing protein 19</fullName>
    </alternativeName>
</protein>
<comment type="function">
    <text evidence="1">Key regulator of abscission step in cytokinesis: part of the cytokinesis checkpoint, a process required to delay abscission to prevent both premature resolution of intercellular chromosome bridges and accumulation of DNA damage. Together with CHMP4C, required to retain abscission-competent VPS4 (VPS4A and/or VPS4B) at the midbody ring until abscission checkpoint signaling is terminated at late cytokinesis. Deactivation of AURKB results in dephosphorylation of CHMP4C followed by its dissociation from ZFYVE19/ANCHR and VPS4 and subsequent abscission (By similarity).</text>
</comment>
<comment type="subunit">
    <text evidence="1">Interacts (via MIM1-B) with VPS4A; interaction takes place at the midbody ring following cytokinesis checkpoint activation.</text>
</comment>
<comment type="subcellular location">
    <subcellularLocation>
        <location evidence="2">Cytoplasm</location>
        <location evidence="2">Cytoskeleton</location>
        <location evidence="2">Microtubule organizing center</location>
        <location evidence="2">Centrosome</location>
    </subcellularLocation>
    <subcellularLocation>
        <location evidence="2">Cleavage furrow</location>
    </subcellularLocation>
    <subcellularLocation>
        <location evidence="2">Midbody</location>
        <location evidence="2">Midbody ring</location>
    </subcellularLocation>
    <text evidence="2">Localizes mainly on centrosomes in interphase and early mitosis. Localizes at the cleavage furrow and midbody ring in late mitosis and cytokinesis.</text>
</comment>
<comment type="domain">
    <text evidence="1">The FYVE-type zinc finger mediates binding to phosphatidylinositol-3-phosphate (PtdIns(3)P).</text>
</comment>
<comment type="domain">
    <text evidence="1">The MIM1-B motif mediates interaction with VPS4A.</text>
</comment>
<name>ANCHR_MOUSE</name>
<dbReference type="EMBL" id="AK005386">
    <property type="protein sequence ID" value="BAB23993.1"/>
    <property type="molecule type" value="mRNA"/>
</dbReference>
<dbReference type="EMBL" id="AL772264">
    <property type="status" value="NOT_ANNOTATED_CDS"/>
    <property type="molecule type" value="Genomic_DNA"/>
</dbReference>
<dbReference type="EMBL" id="AL929318">
    <property type="status" value="NOT_ANNOTATED_CDS"/>
    <property type="molecule type" value="Genomic_DNA"/>
</dbReference>
<dbReference type="EMBL" id="BC018420">
    <property type="protein sequence ID" value="AAH18420.1"/>
    <property type="molecule type" value="mRNA"/>
</dbReference>
<dbReference type="CCDS" id="CCDS16595.1"/>
<dbReference type="RefSeq" id="NP_082330.2">
    <property type="nucleotide sequence ID" value="NM_028054.3"/>
</dbReference>
<dbReference type="PDB" id="1WFK">
    <property type="method" value="NMR"/>
    <property type="chains" value="A=1-75"/>
</dbReference>
<dbReference type="PDB" id="2D8V">
    <property type="method" value="NMR"/>
    <property type="chains" value="A=336-389"/>
</dbReference>
<dbReference type="PDBsum" id="1WFK"/>
<dbReference type="PDBsum" id="2D8V"/>
<dbReference type="BMRB" id="Q9DAZ9"/>
<dbReference type="SMR" id="Q9DAZ9"/>
<dbReference type="BioGRID" id="215091">
    <property type="interactions" value="3"/>
</dbReference>
<dbReference type="FunCoup" id="Q9DAZ9">
    <property type="interactions" value="213"/>
</dbReference>
<dbReference type="STRING" id="10090.ENSMUSP00000087636"/>
<dbReference type="iPTMnet" id="Q9DAZ9"/>
<dbReference type="PhosphoSitePlus" id="Q9DAZ9"/>
<dbReference type="SwissPalm" id="Q9DAZ9"/>
<dbReference type="jPOST" id="Q9DAZ9"/>
<dbReference type="PaxDb" id="10090-ENSMUSP00000087636"/>
<dbReference type="PeptideAtlas" id="Q9DAZ9"/>
<dbReference type="ProteomicsDB" id="296408"/>
<dbReference type="Pumba" id="Q9DAZ9"/>
<dbReference type="Antibodypedia" id="23171">
    <property type="antibodies" value="200 antibodies from 30 providers"/>
</dbReference>
<dbReference type="Ensembl" id="ENSMUST00000090174.11">
    <property type="protein sequence ID" value="ENSMUSP00000087636.5"/>
    <property type="gene ID" value="ENSMUSG00000068580.12"/>
</dbReference>
<dbReference type="GeneID" id="72008"/>
<dbReference type="KEGG" id="mmu:72008"/>
<dbReference type="UCSC" id="uc008lti.2">
    <property type="organism name" value="mouse"/>
</dbReference>
<dbReference type="AGR" id="MGI:1919258"/>
<dbReference type="CTD" id="84936"/>
<dbReference type="MGI" id="MGI:1919258">
    <property type="gene designation" value="Zfyve19"/>
</dbReference>
<dbReference type="VEuPathDB" id="HostDB:ENSMUSG00000068580"/>
<dbReference type="eggNOG" id="KOG1818">
    <property type="taxonomic scope" value="Eukaryota"/>
</dbReference>
<dbReference type="GeneTree" id="ENSGT00390000016108"/>
<dbReference type="HOGENOM" id="CLU_043234_2_0_1"/>
<dbReference type="InParanoid" id="Q9DAZ9"/>
<dbReference type="OMA" id="CYRECHD"/>
<dbReference type="OrthoDB" id="5407799at2759"/>
<dbReference type="PhylomeDB" id="Q9DAZ9"/>
<dbReference type="TreeFam" id="TF317652"/>
<dbReference type="BioGRID-ORCS" id="72008">
    <property type="hits" value="4 hits in 75 CRISPR screens"/>
</dbReference>
<dbReference type="ChiTaRS" id="Zfyve19">
    <property type="organism name" value="mouse"/>
</dbReference>
<dbReference type="EvolutionaryTrace" id="Q9DAZ9"/>
<dbReference type="PRO" id="PR:Q9DAZ9"/>
<dbReference type="Proteomes" id="UP000000589">
    <property type="component" value="Chromosome 2"/>
</dbReference>
<dbReference type="RNAct" id="Q9DAZ9">
    <property type="molecule type" value="protein"/>
</dbReference>
<dbReference type="Bgee" id="ENSMUSG00000068580">
    <property type="expression patterns" value="Expressed in crypt of Lieberkuhn of small intestine and 262 other cell types or tissues"/>
</dbReference>
<dbReference type="ExpressionAtlas" id="Q9DAZ9">
    <property type="expression patterns" value="baseline and differential"/>
</dbReference>
<dbReference type="GO" id="GO:0005813">
    <property type="term" value="C:centrosome"/>
    <property type="evidence" value="ECO:0000250"/>
    <property type="project" value="UniProtKB"/>
</dbReference>
<dbReference type="GO" id="GO:0032154">
    <property type="term" value="C:cleavage furrow"/>
    <property type="evidence" value="ECO:0000250"/>
    <property type="project" value="UniProtKB"/>
</dbReference>
<dbReference type="GO" id="GO:0005737">
    <property type="term" value="C:cytoplasm"/>
    <property type="evidence" value="ECO:0007669"/>
    <property type="project" value="UniProtKB-KW"/>
</dbReference>
<dbReference type="GO" id="GO:0090543">
    <property type="term" value="C:Flemming body"/>
    <property type="evidence" value="ECO:0007669"/>
    <property type="project" value="UniProtKB-SubCell"/>
</dbReference>
<dbReference type="GO" id="GO:0030496">
    <property type="term" value="C:midbody"/>
    <property type="evidence" value="ECO:0000250"/>
    <property type="project" value="UniProtKB"/>
</dbReference>
<dbReference type="GO" id="GO:0032266">
    <property type="term" value="F:phosphatidylinositol-3-phosphate binding"/>
    <property type="evidence" value="ECO:0000250"/>
    <property type="project" value="UniProtKB"/>
</dbReference>
<dbReference type="GO" id="GO:0008270">
    <property type="term" value="F:zinc ion binding"/>
    <property type="evidence" value="ECO:0007669"/>
    <property type="project" value="UniProtKB-KW"/>
</dbReference>
<dbReference type="GO" id="GO:0061952">
    <property type="term" value="P:midbody abscission"/>
    <property type="evidence" value="ECO:0000250"/>
    <property type="project" value="UniProtKB"/>
</dbReference>
<dbReference type="GO" id="GO:0044878">
    <property type="term" value="P:mitotic cytokinesis checkpoint signaling"/>
    <property type="evidence" value="ECO:0000250"/>
    <property type="project" value="UniProtKB"/>
</dbReference>
<dbReference type="GO" id="GO:0032466">
    <property type="term" value="P:negative regulation of cytokinesis"/>
    <property type="evidence" value="ECO:0000250"/>
    <property type="project" value="UniProtKB"/>
</dbReference>
<dbReference type="CDD" id="cd19817">
    <property type="entry name" value="Bbox1_ANCHR-like"/>
    <property type="match status" value="1"/>
</dbReference>
<dbReference type="CDD" id="cd15749">
    <property type="entry name" value="FYVE_ZFY19"/>
    <property type="match status" value="1"/>
</dbReference>
<dbReference type="FunFam" id="3.30.40.10:FF:000333">
    <property type="entry name" value="Zinc finger FYVE-type containing 19"/>
    <property type="match status" value="1"/>
</dbReference>
<dbReference type="Gene3D" id="3.30.40.10">
    <property type="entry name" value="Zinc/RING finger domain, C3HC4 (zinc finger)"/>
    <property type="match status" value="1"/>
</dbReference>
<dbReference type="InterPro" id="IPR044553">
    <property type="entry name" value="Bbox1_ANCHR"/>
</dbReference>
<dbReference type="InterPro" id="IPR000306">
    <property type="entry name" value="Znf_FYVE"/>
</dbReference>
<dbReference type="InterPro" id="IPR017455">
    <property type="entry name" value="Znf_FYVE-rel"/>
</dbReference>
<dbReference type="InterPro" id="IPR011011">
    <property type="entry name" value="Znf_FYVE_PHD"/>
</dbReference>
<dbReference type="InterPro" id="IPR013083">
    <property type="entry name" value="Znf_RING/FYVE/PHD"/>
</dbReference>
<dbReference type="PANTHER" id="PTHR46603">
    <property type="entry name" value="ABSCISSION/NOCUT CHECKPOINT REGULATOR"/>
    <property type="match status" value="1"/>
</dbReference>
<dbReference type="PANTHER" id="PTHR46603:SF1">
    <property type="entry name" value="ABSCISSION_NOCUT CHECKPOINT REGULATOR"/>
    <property type="match status" value="1"/>
</dbReference>
<dbReference type="Pfam" id="PF22586">
    <property type="entry name" value="ANCHR-like_BBOX"/>
    <property type="match status" value="1"/>
</dbReference>
<dbReference type="Pfam" id="PF01363">
    <property type="entry name" value="FYVE"/>
    <property type="match status" value="1"/>
</dbReference>
<dbReference type="SMART" id="SM00064">
    <property type="entry name" value="FYVE"/>
    <property type="match status" value="1"/>
</dbReference>
<dbReference type="SUPFAM" id="SSF57845">
    <property type="entry name" value="B-box zinc-binding domain"/>
    <property type="match status" value="1"/>
</dbReference>
<dbReference type="SUPFAM" id="SSF57903">
    <property type="entry name" value="FYVE/PHD zinc finger"/>
    <property type="match status" value="1"/>
</dbReference>
<dbReference type="PROSITE" id="PS50178">
    <property type="entry name" value="ZF_FYVE"/>
    <property type="match status" value="1"/>
</dbReference>
<evidence type="ECO:0000250" key="1"/>
<evidence type="ECO:0000250" key="2">
    <source>
        <dbReference type="UniProtKB" id="Q96K21"/>
    </source>
</evidence>
<evidence type="ECO:0000255" key="3"/>
<evidence type="ECO:0000255" key="4">
    <source>
        <dbReference type="PROSITE-ProRule" id="PRU00091"/>
    </source>
</evidence>
<evidence type="ECO:0000256" key="5">
    <source>
        <dbReference type="SAM" id="MobiDB-lite"/>
    </source>
</evidence>
<evidence type="ECO:0000269" key="6">
    <source>
    </source>
</evidence>
<evidence type="ECO:0000269" key="7">
    <source>
    </source>
</evidence>
<evidence type="ECO:0007744" key="8">
    <source>
    </source>
</evidence>
<evidence type="ECO:0007744" key="9">
    <source>
    </source>
</evidence>
<evidence type="ECO:0007744" key="10">
    <source>
    </source>
</evidence>
<evidence type="ECO:0007744" key="11">
    <source>
    </source>
</evidence>
<evidence type="ECO:0007829" key="12">
    <source>
        <dbReference type="PDB" id="1WFK"/>
    </source>
</evidence>
<evidence type="ECO:0007829" key="13">
    <source>
        <dbReference type="PDB" id="2D8V"/>
    </source>
</evidence>
<proteinExistence type="evidence at protein level"/>
<keyword id="KW-0002">3D-structure</keyword>
<keyword id="KW-0131">Cell cycle</keyword>
<keyword id="KW-0132">Cell division</keyword>
<keyword id="KW-0175">Coiled coil</keyword>
<keyword id="KW-0963">Cytoplasm</keyword>
<keyword id="KW-0206">Cytoskeleton</keyword>
<keyword id="KW-1017">Isopeptide bond</keyword>
<keyword id="KW-0446">Lipid-binding</keyword>
<keyword id="KW-0479">Metal-binding</keyword>
<keyword id="KW-0597">Phosphoprotein</keyword>
<keyword id="KW-1185">Reference proteome</keyword>
<keyword id="KW-0832">Ubl conjugation</keyword>
<keyword id="KW-0862">Zinc</keyword>
<keyword id="KW-0863">Zinc-finger</keyword>
<organism>
    <name type="scientific">Mus musculus</name>
    <name type="common">Mouse</name>
    <dbReference type="NCBI Taxonomy" id="10090"/>
    <lineage>
        <taxon>Eukaryota</taxon>
        <taxon>Metazoa</taxon>
        <taxon>Chordata</taxon>
        <taxon>Craniata</taxon>
        <taxon>Vertebrata</taxon>
        <taxon>Euteleostomi</taxon>
        <taxon>Mammalia</taxon>
        <taxon>Eutheria</taxon>
        <taxon>Euarchontoglires</taxon>
        <taxon>Glires</taxon>
        <taxon>Rodentia</taxon>
        <taxon>Myomorpha</taxon>
        <taxon>Muroidea</taxon>
        <taxon>Muridae</taxon>
        <taxon>Murinae</taxon>
        <taxon>Mus</taxon>
        <taxon>Mus</taxon>
    </lineage>
</organism>
<accession>Q9DAZ9</accession>
<accession>A2AV55</accession>
<accession>Q8VCV7</accession>